<protein>
    <recommendedName>
        <fullName evidence="1">DNA ligase</fullName>
        <ecNumber evidence="1">6.5.1.2</ecNumber>
    </recommendedName>
    <alternativeName>
        <fullName evidence="1">Polydeoxyribonucleotide synthase [NAD(+)]</fullName>
    </alternativeName>
</protein>
<organism>
    <name type="scientific">Thiobacillus denitrificans (strain ATCC 25259 / T1)</name>
    <dbReference type="NCBI Taxonomy" id="292415"/>
    <lineage>
        <taxon>Bacteria</taxon>
        <taxon>Pseudomonadati</taxon>
        <taxon>Pseudomonadota</taxon>
        <taxon>Betaproteobacteria</taxon>
        <taxon>Nitrosomonadales</taxon>
        <taxon>Thiobacillaceae</taxon>
        <taxon>Thiobacillus</taxon>
    </lineage>
</organism>
<accession>Q3SL40</accession>
<evidence type="ECO:0000255" key="1">
    <source>
        <dbReference type="HAMAP-Rule" id="MF_01588"/>
    </source>
</evidence>
<feature type="chain" id="PRO_0000313494" description="DNA ligase">
    <location>
        <begin position="1"/>
        <end position="686"/>
    </location>
</feature>
<feature type="domain" description="BRCT" evidence="1">
    <location>
        <begin position="603"/>
        <end position="686"/>
    </location>
</feature>
<feature type="active site" description="N6-AMP-lysine intermediate" evidence="1">
    <location>
        <position position="122"/>
    </location>
</feature>
<feature type="binding site" evidence="1">
    <location>
        <begin position="34"/>
        <end position="38"/>
    </location>
    <ligand>
        <name>NAD(+)</name>
        <dbReference type="ChEBI" id="CHEBI:57540"/>
    </ligand>
</feature>
<feature type="binding site" evidence="1">
    <location>
        <begin position="83"/>
        <end position="84"/>
    </location>
    <ligand>
        <name>NAD(+)</name>
        <dbReference type="ChEBI" id="CHEBI:57540"/>
    </ligand>
</feature>
<feature type="binding site" evidence="1">
    <location>
        <position position="120"/>
    </location>
    <ligand>
        <name>NAD(+)</name>
        <dbReference type="ChEBI" id="CHEBI:57540"/>
    </ligand>
</feature>
<feature type="binding site" evidence="1">
    <location>
        <position position="143"/>
    </location>
    <ligand>
        <name>NAD(+)</name>
        <dbReference type="ChEBI" id="CHEBI:57540"/>
    </ligand>
</feature>
<feature type="binding site" evidence="1">
    <location>
        <position position="180"/>
    </location>
    <ligand>
        <name>NAD(+)</name>
        <dbReference type="ChEBI" id="CHEBI:57540"/>
    </ligand>
</feature>
<feature type="binding site" evidence="1">
    <location>
        <position position="298"/>
    </location>
    <ligand>
        <name>NAD(+)</name>
        <dbReference type="ChEBI" id="CHEBI:57540"/>
    </ligand>
</feature>
<feature type="binding site" evidence="1">
    <location>
        <position position="322"/>
    </location>
    <ligand>
        <name>NAD(+)</name>
        <dbReference type="ChEBI" id="CHEBI:57540"/>
    </ligand>
</feature>
<feature type="binding site" evidence="1">
    <location>
        <position position="420"/>
    </location>
    <ligand>
        <name>Zn(2+)</name>
        <dbReference type="ChEBI" id="CHEBI:29105"/>
    </ligand>
</feature>
<feature type="binding site" evidence="1">
    <location>
        <position position="423"/>
    </location>
    <ligand>
        <name>Zn(2+)</name>
        <dbReference type="ChEBI" id="CHEBI:29105"/>
    </ligand>
</feature>
<feature type="binding site" evidence="1">
    <location>
        <position position="438"/>
    </location>
    <ligand>
        <name>Zn(2+)</name>
        <dbReference type="ChEBI" id="CHEBI:29105"/>
    </ligand>
</feature>
<feature type="binding site" evidence="1">
    <location>
        <position position="444"/>
    </location>
    <ligand>
        <name>Zn(2+)</name>
        <dbReference type="ChEBI" id="CHEBI:29105"/>
    </ligand>
</feature>
<keyword id="KW-0227">DNA damage</keyword>
<keyword id="KW-0234">DNA repair</keyword>
<keyword id="KW-0235">DNA replication</keyword>
<keyword id="KW-0436">Ligase</keyword>
<keyword id="KW-0460">Magnesium</keyword>
<keyword id="KW-0464">Manganese</keyword>
<keyword id="KW-0479">Metal-binding</keyword>
<keyword id="KW-0520">NAD</keyword>
<keyword id="KW-1185">Reference proteome</keyword>
<keyword id="KW-0862">Zinc</keyword>
<gene>
    <name evidence="1" type="primary">ligA</name>
    <name type="ordered locus">Tbd_0624</name>
</gene>
<reference key="1">
    <citation type="journal article" date="2006" name="J. Bacteriol.">
        <title>The genome sequence of the obligately chemolithoautotrophic, facultatively anaerobic bacterium Thiobacillus denitrificans.</title>
        <authorList>
            <person name="Beller H.R."/>
            <person name="Chain P.S."/>
            <person name="Letain T.E."/>
            <person name="Chakicherla A."/>
            <person name="Larimer F.W."/>
            <person name="Richardson P.M."/>
            <person name="Coleman M.A."/>
            <person name="Wood A.P."/>
            <person name="Kelly D.P."/>
        </authorList>
    </citation>
    <scope>NUCLEOTIDE SEQUENCE [LARGE SCALE GENOMIC DNA]</scope>
    <source>
        <strain>ATCC 25259 / T1</strain>
    </source>
</reference>
<name>DNLJ_THIDA</name>
<sequence length="686" mass="74111">MADRDVQARAAALRREIERHNYAYYVLDAPTIPDAEYDRLYHELEALEAAHPELVAADSPTRRVGGQPLAGFKPVRHAVPMLSIRTETDTTAAGARAFDVRVRKELGLAPADPPVEYAAELKFDGLAINLRYEAGVLVAAATRGDGETGEDVTQNVRTVRTIPLRLHGDAPPAVLEVRGEVFMRRDDFERYNAQQRAAGKPTLVNPRNGAAGSIRQLDPAIAGQRPLSFYAYGLGEVVGWPDAPATHGATLDALQGLGVPVSAERCVCNGVDDLIAFHDDIAARRDQLPFDIDGVVYKVNAFALQRELGFLTREPRWAVAHKYPAQEQLTTVLGIGVHVGRTGALTPVARLAPVFVGGVTVTNATLHNQDEIDRKDTRVGDTVIVRRAGDVIPEIVATVLERRPQPEPPRFNILQSYPVCPECGSHVVRLEGEAVARCTGGLYCPAQRKQALLHFASRRAMDIDGVGEKLVDQLVSRELVRTPADLYRLPLETLAGLERMAEKSARNLIQAIETSKSTTLARFIYALGIRNVGETTARDLARHFGALDALLGANETALLGVRDVGPIVAQSIAQFFAEPHNLEVVGKLRALGVHWPETTGMQQSGGILSGKTLVLTGTLPALTRDQAKERIESAGGKVAGSVSKKTDYVVAGEEAGSKLAKARELGVTILDEEELLALLGSNKKNG</sequence>
<comment type="function">
    <text evidence="1">DNA ligase that catalyzes the formation of phosphodiester linkages between 5'-phosphoryl and 3'-hydroxyl groups in double-stranded DNA using NAD as a coenzyme and as the energy source for the reaction. It is essential for DNA replication and repair of damaged DNA.</text>
</comment>
<comment type="catalytic activity">
    <reaction evidence="1">
        <text>NAD(+) + (deoxyribonucleotide)n-3'-hydroxyl + 5'-phospho-(deoxyribonucleotide)m = (deoxyribonucleotide)n+m + AMP + beta-nicotinamide D-nucleotide.</text>
        <dbReference type="EC" id="6.5.1.2"/>
    </reaction>
</comment>
<comment type="cofactor">
    <cofactor evidence="1">
        <name>Mg(2+)</name>
        <dbReference type="ChEBI" id="CHEBI:18420"/>
    </cofactor>
    <cofactor evidence="1">
        <name>Mn(2+)</name>
        <dbReference type="ChEBI" id="CHEBI:29035"/>
    </cofactor>
</comment>
<comment type="similarity">
    <text evidence="1">Belongs to the NAD-dependent DNA ligase family. LigA subfamily.</text>
</comment>
<proteinExistence type="inferred from homology"/>
<dbReference type="EC" id="6.5.1.2" evidence="1"/>
<dbReference type="EMBL" id="CP000116">
    <property type="protein sequence ID" value="AAZ96577.1"/>
    <property type="molecule type" value="Genomic_DNA"/>
</dbReference>
<dbReference type="RefSeq" id="WP_011311136.1">
    <property type="nucleotide sequence ID" value="NC_007404.1"/>
</dbReference>
<dbReference type="SMR" id="Q3SL40"/>
<dbReference type="STRING" id="292415.Tbd_0624"/>
<dbReference type="KEGG" id="tbd:Tbd_0624"/>
<dbReference type="eggNOG" id="COG0272">
    <property type="taxonomic scope" value="Bacteria"/>
</dbReference>
<dbReference type="HOGENOM" id="CLU_007764_2_1_4"/>
<dbReference type="OrthoDB" id="9759736at2"/>
<dbReference type="Proteomes" id="UP000008291">
    <property type="component" value="Chromosome"/>
</dbReference>
<dbReference type="GO" id="GO:0005829">
    <property type="term" value="C:cytosol"/>
    <property type="evidence" value="ECO:0007669"/>
    <property type="project" value="TreeGrafter"/>
</dbReference>
<dbReference type="GO" id="GO:0003677">
    <property type="term" value="F:DNA binding"/>
    <property type="evidence" value="ECO:0007669"/>
    <property type="project" value="InterPro"/>
</dbReference>
<dbReference type="GO" id="GO:0003911">
    <property type="term" value="F:DNA ligase (NAD+) activity"/>
    <property type="evidence" value="ECO:0007669"/>
    <property type="project" value="UniProtKB-UniRule"/>
</dbReference>
<dbReference type="GO" id="GO:0046872">
    <property type="term" value="F:metal ion binding"/>
    <property type="evidence" value="ECO:0007669"/>
    <property type="project" value="UniProtKB-KW"/>
</dbReference>
<dbReference type="GO" id="GO:0006281">
    <property type="term" value="P:DNA repair"/>
    <property type="evidence" value="ECO:0007669"/>
    <property type="project" value="UniProtKB-KW"/>
</dbReference>
<dbReference type="GO" id="GO:0006260">
    <property type="term" value="P:DNA replication"/>
    <property type="evidence" value="ECO:0007669"/>
    <property type="project" value="UniProtKB-KW"/>
</dbReference>
<dbReference type="CDD" id="cd17748">
    <property type="entry name" value="BRCT_DNA_ligase_like"/>
    <property type="match status" value="1"/>
</dbReference>
<dbReference type="CDD" id="cd00114">
    <property type="entry name" value="LIGANc"/>
    <property type="match status" value="1"/>
</dbReference>
<dbReference type="FunFam" id="1.10.150.20:FF:000006">
    <property type="entry name" value="DNA ligase"/>
    <property type="match status" value="1"/>
</dbReference>
<dbReference type="FunFam" id="1.10.150.20:FF:000007">
    <property type="entry name" value="DNA ligase"/>
    <property type="match status" value="1"/>
</dbReference>
<dbReference type="FunFam" id="1.10.287.610:FF:000002">
    <property type="entry name" value="DNA ligase"/>
    <property type="match status" value="1"/>
</dbReference>
<dbReference type="FunFam" id="2.40.50.140:FF:000012">
    <property type="entry name" value="DNA ligase"/>
    <property type="match status" value="1"/>
</dbReference>
<dbReference type="FunFam" id="3.30.470.30:FF:000001">
    <property type="entry name" value="DNA ligase"/>
    <property type="match status" value="1"/>
</dbReference>
<dbReference type="FunFam" id="3.40.50.10190:FF:000054">
    <property type="entry name" value="DNA ligase"/>
    <property type="match status" value="1"/>
</dbReference>
<dbReference type="Gene3D" id="6.20.10.30">
    <property type="match status" value="1"/>
</dbReference>
<dbReference type="Gene3D" id="1.10.150.20">
    <property type="entry name" value="5' to 3' exonuclease, C-terminal subdomain"/>
    <property type="match status" value="2"/>
</dbReference>
<dbReference type="Gene3D" id="3.40.50.10190">
    <property type="entry name" value="BRCT domain"/>
    <property type="match status" value="1"/>
</dbReference>
<dbReference type="Gene3D" id="3.30.470.30">
    <property type="entry name" value="DNA ligase/mRNA capping enzyme"/>
    <property type="match status" value="1"/>
</dbReference>
<dbReference type="Gene3D" id="1.10.287.610">
    <property type="entry name" value="Helix hairpin bin"/>
    <property type="match status" value="1"/>
</dbReference>
<dbReference type="Gene3D" id="2.40.50.140">
    <property type="entry name" value="Nucleic acid-binding proteins"/>
    <property type="match status" value="1"/>
</dbReference>
<dbReference type="HAMAP" id="MF_01588">
    <property type="entry name" value="DNA_ligase_A"/>
    <property type="match status" value="1"/>
</dbReference>
<dbReference type="InterPro" id="IPR001357">
    <property type="entry name" value="BRCT_dom"/>
</dbReference>
<dbReference type="InterPro" id="IPR036420">
    <property type="entry name" value="BRCT_dom_sf"/>
</dbReference>
<dbReference type="InterPro" id="IPR041663">
    <property type="entry name" value="DisA/LigA_HHH"/>
</dbReference>
<dbReference type="InterPro" id="IPR001679">
    <property type="entry name" value="DNA_ligase"/>
</dbReference>
<dbReference type="InterPro" id="IPR018239">
    <property type="entry name" value="DNA_ligase_AS"/>
</dbReference>
<dbReference type="InterPro" id="IPR033136">
    <property type="entry name" value="DNA_ligase_CS"/>
</dbReference>
<dbReference type="InterPro" id="IPR013839">
    <property type="entry name" value="DNAligase_adenylation"/>
</dbReference>
<dbReference type="InterPro" id="IPR013840">
    <property type="entry name" value="DNAligase_N"/>
</dbReference>
<dbReference type="InterPro" id="IPR003583">
    <property type="entry name" value="Hlx-hairpin-Hlx_DNA-bd_motif"/>
</dbReference>
<dbReference type="InterPro" id="IPR012340">
    <property type="entry name" value="NA-bd_OB-fold"/>
</dbReference>
<dbReference type="InterPro" id="IPR004150">
    <property type="entry name" value="NAD_DNA_ligase_OB"/>
</dbReference>
<dbReference type="InterPro" id="IPR010994">
    <property type="entry name" value="RuvA_2-like"/>
</dbReference>
<dbReference type="InterPro" id="IPR004149">
    <property type="entry name" value="Znf_DNAligase_C4"/>
</dbReference>
<dbReference type="NCBIfam" id="TIGR00575">
    <property type="entry name" value="dnlj"/>
    <property type="match status" value="1"/>
</dbReference>
<dbReference type="NCBIfam" id="NF005932">
    <property type="entry name" value="PRK07956.1"/>
    <property type="match status" value="1"/>
</dbReference>
<dbReference type="PANTHER" id="PTHR23389">
    <property type="entry name" value="CHROMOSOME TRANSMISSION FIDELITY FACTOR 18"/>
    <property type="match status" value="1"/>
</dbReference>
<dbReference type="PANTHER" id="PTHR23389:SF9">
    <property type="entry name" value="DNA LIGASE"/>
    <property type="match status" value="1"/>
</dbReference>
<dbReference type="Pfam" id="PF00533">
    <property type="entry name" value="BRCT"/>
    <property type="match status" value="1"/>
</dbReference>
<dbReference type="Pfam" id="PF01653">
    <property type="entry name" value="DNA_ligase_aden"/>
    <property type="match status" value="1"/>
</dbReference>
<dbReference type="Pfam" id="PF03120">
    <property type="entry name" value="DNA_ligase_OB"/>
    <property type="match status" value="1"/>
</dbReference>
<dbReference type="Pfam" id="PF03119">
    <property type="entry name" value="DNA_ligase_ZBD"/>
    <property type="match status" value="1"/>
</dbReference>
<dbReference type="Pfam" id="PF12826">
    <property type="entry name" value="HHH_2"/>
    <property type="match status" value="1"/>
</dbReference>
<dbReference type="Pfam" id="PF14520">
    <property type="entry name" value="HHH_5"/>
    <property type="match status" value="1"/>
</dbReference>
<dbReference type="Pfam" id="PF22745">
    <property type="entry name" value="Nlig-Ia"/>
    <property type="match status" value="1"/>
</dbReference>
<dbReference type="PIRSF" id="PIRSF001604">
    <property type="entry name" value="LigA"/>
    <property type="match status" value="1"/>
</dbReference>
<dbReference type="SMART" id="SM00292">
    <property type="entry name" value="BRCT"/>
    <property type="match status" value="1"/>
</dbReference>
<dbReference type="SMART" id="SM00278">
    <property type="entry name" value="HhH1"/>
    <property type="match status" value="4"/>
</dbReference>
<dbReference type="SMART" id="SM00532">
    <property type="entry name" value="LIGANc"/>
    <property type="match status" value="1"/>
</dbReference>
<dbReference type="SUPFAM" id="SSF52113">
    <property type="entry name" value="BRCT domain"/>
    <property type="match status" value="1"/>
</dbReference>
<dbReference type="SUPFAM" id="SSF56091">
    <property type="entry name" value="DNA ligase/mRNA capping enzyme, catalytic domain"/>
    <property type="match status" value="1"/>
</dbReference>
<dbReference type="SUPFAM" id="SSF50249">
    <property type="entry name" value="Nucleic acid-binding proteins"/>
    <property type="match status" value="1"/>
</dbReference>
<dbReference type="SUPFAM" id="SSF47781">
    <property type="entry name" value="RuvA domain 2-like"/>
    <property type="match status" value="1"/>
</dbReference>
<dbReference type="PROSITE" id="PS50172">
    <property type="entry name" value="BRCT"/>
    <property type="match status" value="1"/>
</dbReference>
<dbReference type="PROSITE" id="PS01055">
    <property type="entry name" value="DNA_LIGASE_N1"/>
    <property type="match status" value="1"/>
</dbReference>
<dbReference type="PROSITE" id="PS01056">
    <property type="entry name" value="DNA_LIGASE_N2"/>
    <property type="match status" value="1"/>
</dbReference>